<reference key="1">
    <citation type="journal article" date="2001" name="J. Biol. Chem.">
        <title>Metabolism of sucrose and its five linkage-isomeric alpha-D-glucosyl-D-fructoses by Klebsiella pneumoniae. Participation and properties of sucrose-6-phosphate hydrolase and phospho-alpha-glucosidase.</title>
        <authorList>
            <person name="Thompson J."/>
            <person name="Robrish S.A."/>
            <person name="Immel S."/>
            <person name="Lichtenthaler F.W."/>
            <person name="Hall B.G."/>
            <person name="Pikis A."/>
        </authorList>
    </citation>
    <scope>NUCLEOTIDE SEQUENCE [GENOMIC DNA]</scope>
    <source>
        <strain>ATCC 23357 / A-11</strain>
    </source>
</reference>
<reference key="2">
    <citation type="journal article" date="2001" name="Carbohydr. Res.">
        <title>Phosphorylation and metabolism of sucrose and its five linkage-isomeric alpha-D-glucosyl-D-fructoses by Klebsiella pneumoniae.</title>
        <authorList>
            <person name="Thompson J."/>
            <person name="Robrish S.A."/>
            <person name="Pikis A."/>
            <person name="Brust A."/>
            <person name="Lichtenthaler F.W."/>
        </authorList>
    </citation>
    <scope>FUNCTION</scope>
    <source>
        <strain>ATCC 23357 / A-11</strain>
    </source>
</reference>
<sequence>MLSQIQRFGGAMFTPVLLFPFAGIVVGIAIMLRNPMFVGEALTAPDSLFAQIVHIIEEGGWTVFRNMPLIFAVGLPIGLAKQAQGRACLAVLVSFLTWNYFINAMGMTWGHFFGVDFSAEPTAGSGLTMIAGIKTLDTSIIGAIVISGLVTALHNRYFDKPLPVFLGIFQGSSFVVIVAFLAMIPCAWLTLLGWPKVQLGIESLQAFLRSAGALGVWVYIFLERILIPTGLHHFVYGPFIFGPAVVEGGLQVYWAEHLQAFSQSTEPLKTLFPEGGFALHGNSKVFGSVGIALALYFTAAPENRVKVAGLLIPATLTAMLVGITEPLEFTFLFISPLLFAVHAVLAATMATVMYICGVVGNFGGGLLDQFLPQNWIPMFHHHASMMFIQIGIGLCFTALYFVVFRTLILRLNLKTPGREESEIKLYSKADYQAARGKTTAAAAPETRLGQAAGFLQALGGADNIESINNCATRLRIALVDMAKTQSDDVFKALGAHGVVRRGNGIQVIVGLHVPQVRDQLENLMKDSLSTEHTTMTEAVS</sequence>
<evidence type="ECO:0000255" key="1">
    <source>
        <dbReference type="PROSITE-ProRule" id="PRU00421"/>
    </source>
</evidence>
<evidence type="ECO:0000255" key="2">
    <source>
        <dbReference type="PROSITE-ProRule" id="PRU00426"/>
    </source>
</evidence>
<evidence type="ECO:0000269" key="3">
    <source>
    </source>
</evidence>
<evidence type="ECO:0000305" key="4"/>
<name>PTUCB_KLEPN</name>
<feature type="chain" id="PRO_0000186478" description="PTS system alpha-glucoside-specific EIICB component">
    <location>
        <begin position="1"/>
        <end position="540"/>
    </location>
</feature>
<feature type="transmembrane region" description="Helical" evidence="2">
    <location>
        <begin position="12"/>
        <end position="32"/>
    </location>
</feature>
<feature type="transmembrane region" description="Helical" evidence="2">
    <location>
        <begin position="87"/>
        <end position="107"/>
    </location>
</feature>
<feature type="transmembrane region" description="Helical" evidence="2">
    <location>
        <begin position="130"/>
        <end position="150"/>
    </location>
</feature>
<feature type="transmembrane region" description="Helical" evidence="2">
    <location>
        <begin position="174"/>
        <end position="194"/>
    </location>
</feature>
<feature type="transmembrane region" description="Helical" evidence="2">
    <location>
        <begin position="201"/>
        <end position="221"/>
    </location>
</feature>
<feature type="transmembrane region" description="Helical" evidence="2">
    <location>
        <begin position="225"/>
        <end position="245"/>
    </location>
</feature>
<feature type="transmembrane region" description="Helical" evidence="2">
    <location>
        <begin position="277"/>
        <end position="297"/>
    </location>
</feature>
<feature type="transmembrane region" description="Helical" evidence="2">
    <location>
        <begin position="307"/>
        <end position="327"/>
    </location>
</feature>
<feature type="transmembrane region" description="Helical" evidence="2">
    <location>
        <begin position="329"/>
        <end position="349"/>
    </location>
</feature>
<feature type="transmembrane region" description="Helical" evidence="2">
    <location>
        <begin position="352"/>
        <end position="372"/>
    </location>
</feature>
<feature type="transmembrane region" description="Helical" evidence="2">
    <location>
        <begin position="384"/>
        <end position="404"/>
    </location>
</feature>
<feature type="domain" description="PTS EIIC type-1" evidence="2">
    <location>
        <begin position="1"/>
        <end position="420"/>
    </location>
</feature>
<feature type="domain" description="PTS EIIB type-1" evidence="1">
    <location>
        <begin position="448"/>
        <end position="530"/>
    </location>
</feature>
<feature type="active site" description="Phosphocysteine intermediate; for EIIB activity" evidence="1">
    <location>
        <position position="470"/>
    </location>
</feature>
<keyword id="KW-1003">Cell membrane</keyword>
<keyword id="KW-0418">Kinase</keyword>
<keyword id="KW-0472">Membrane</keyword>
<keyword id="KW-0598">Phosphotransferase system</keyword>
<keyword id="KW-0762">Sugar transport</keyword>
<keyword id="KW-0808">Transferase</keyword>
<keyword id="KW-0812">Transmembrane</keyword>
<keyword id="KW-1133">Transmembrane helix</keyword>
<keyword id="KW-0813">Transport</keyword>
<protein>
    <recommendedName>
        <fullName>PTS system alpha-glucoside-specific EIICB component</fullName>
    </recommendedName>
    <domain>
        <recommendedName>
            <fullName>Alpha-glucoside permease IIC component</fullName>
        </recommendedName>
        <alternativeName>
            <fullName>PTS system alpha-glucoside-specific EIIC component</fullName>
        </alternativeName>
    </domain>
    <domain>
        <recommendedName>
            <fullName>Alpha-glucoside-specific phosphotransferase enzyme IIB component</fullName>
            <ecNumber>2.7.1.-</ecNumber>
        </recommendedName>
        <alternativeName>
            <fullName>PTS system alpha-glucoside-specific EIIB component</fullName>
        </alternativeName>
    </domain>
</protein>
<dbReference type="EC" id="2.7.1.-"/>
<dbReference type="EMBL" id="AF337811">
    <property type="protein sequence ID" value="AAK01456.1"/>
    <property type="molecule type" value="Genomic_DNA"/>
</dbReference>
<dbReference type="RefSeq" id="WP_002923307.1">
    <property type="nucleotide sequence ID" value="NZ_WYAM01000023.1"/>
</dbReference>
<dbReference type="SMR" id="Q9AGA7"/>
<dbReference type="TCDB" id="4.A.1.1.10">
    <property type="family name" value="the pts glucose-glucoside (glc) family"/>
</dbReference>
<dbReference type="GO" id="GO:0005886">
    <property type="term" value="C:plasma membrane"/>
    <property type="evidence" value="ECO:0007669"/>
    <property type="project" value="UniProtKB-SubCell"/>
</dbReference>
<dbReference type="GO" id="GO:0016301">
    <property type="term" value="F:kinase activity"/>
    <property type="evidence" value="ECO:0007669"/>
    <property type="project" value="UniProtKB-KW"/>
</dbReference>
<dbReference type="GO" id="GO:0008982">
    <property type="term" value="F:protein-N(PI)-phosphohistidine-sugar phosphotransferase activity"/>
    <property type="evidence" value="ECO:0007669"/>
    <property type="project" value="InterPro"/>
</dbReference>
<dbReference type="GO" id="GO:0090563">
    <property type="term" value="F:protein-phosphocysteine-sugar phosphotransferase activity"/>
    <property type="evidence" value="ECO:0007669"/>
    <property type="project" value="TreeGrafter"/>
</dbReference>
<dbReference type="GO" id="GO:0009401">
    <property type="term" value="P:phosphoenolpyruvate-dependent sugar phosphotransferase system"/>
    <property type="evidence" value="ECO:0007669"/>
    <property type="project" value="UniProtKB-KW"/>
</dbReference>
<dbReference type="CDD" id="cd00212">
    <property type="entry name" value="PTS_IIB_glc"/>
    <property type="match status" value="1"/>
</dbReference>
<dbReference type="Gene3D" id="3.30.1360.60">
    <property type="entry name" value="Glucose permease domain IIB"/>
    <property type="match status" value="1"/>
</dbReference>
<dbReference type="InterPro" id="IPR036878">
    <property type="entry name" value="Glu_permease_IIB"/>
</dbReference>
<dbReference type="InterPro" id="IPR018113">
    <property type="entry name" value="PTrfase_EIIB_Cys"/>
</dbReference>
<dbReference type="InterPro" id="IPR003352">
    <property type="entry name" value="PTS_EIIC"/>
</dbReference>
<dbReference type="InterPro" id="IPR013013">
    <property type="entry name" value="PTS_EIIC_1"/>
</dbReference>
<dbReference type="InterPro" id="IPR050429">
    <property type="entry name" value="PTS_Glucose_EIICBA"/>
</dbReference>
<dbReference type="InterPro" id="IPR001996">
    <property type="entry name" value="PTS_IIB_1"/>
</dbReference>
<dbReference type="InterPro" id="IPR010975">
    <property type="entry name" value="PTS_IIBC_a_glc"/>
</dbReference>
<dbReference type="InterPro" id="IPR004719">
    <property type="entry name" value="PTS_maltose/Glc_sub_IIC"/>
</dbReference>
<dbReference type="NCBIfam" id="TIGR00826">
    <property type="entry name" value="EIIB_glc"/>
    <property type="match status" value="1"/>
</dbReference>
<dbReference type="NCBIfam" id="TIGR00852">
    <property type="entry name" value="pts-Glc"/>
    <property type="match status" value="1"/>
</dbReference>
<dbReference type="NCBIfam" id="TIGR02005">
    <property type="entry name" value="PTS-IIBC-alpha"/>
    <property type="match status" value="1"/>
</dbReference>
<dbReference type="PANTHER" id="PTHR30009">
    <property type="entry name" value="CYTOCHROME C-TYPE SYNTHESIS PROTEIN AND PTS TRANSMEMBRANE COMPONENT"/>
    <property type="match status" value="1"/>
</dbReference>
<dbReference type="PANTHER" id="PTHR30009:SF12">
    <property type="entry name" value="PHOSPHOTRANSFERASE IIC COMPONENT GLVC"/>
    <property type="match status" value="1"/>
</dbReference>
<dbReference type="Pfam" id="PF00367">
    <property type="entry name" value="PTS_EIIB"/>
    <property type="match status" value="1"/>
</dbReference>
<dbReference type="Pfam" id="PF02378">
    <property type="entry name" value="PTS_EIIC"/>
    <property type="match status" value="1"/>
</dbReference>
<dbReference type="SUPFAM" id="SSF55604">
    <property type="entry name" value="Glucose permease domain IIB"/>
    <property type="match status" value="1"/>
</dbReference>
<dbReference type="PROSITE" id="PS51098">
    <property type="entry name" value="PTS_EIIB_TYPE_1"/>
    <property type="match status" value="1"/>
</dbReference>
<dbReference type="PROSITE" id="PS01035">
    <property type="entry name" value="PTS_EIIB_TYPE_1_CYS"/>
    <property type="match status" value="1"/>
</dbReference>
<dbReference type="PROSITE" id="PS51103">
    <property type="entry name" value="PTS_EIIC_TYPE_1"/>
    <property type="match status" value="1"/>
</dbReference>
<comment type="function">
    <text evidence="3">The phosphoenolpyruvate-dependent sugar phosphotransferase system (sugar PTS), a major carbohydrate active -transport system, catalyzes the phosphorylation of incoming sugar substrates concomitantly with their translocation across the cell membrane. This system is involved in alpha-glucoside transport.</text>
</comment>
<comment type="function">
    <text evidence="3">Involved in the transport and simultaneous phosphorylation at O-6 of the glucosyl moiety of sucrose and its five linkage-isomeric alpha-D-glucosyl-D-fructoses. Can also transport maltose, isomaltose and maltitol, phosphorylating at O-6 of their non-reducing glucose portion.</text>
</comment>
<comment type="subcellular location">
    <subcellularLocation>
        <location evidence="4">Cell membrane</location>
        <topology evidence="4">Multi-pass membrane protein</topology>
    </subcellularLocation>
</comment>
<comment type="domain">
    <text>The EIIC domain forms the PTS system translocation channel and contains the specific substrate-binding site.</text>
</comment>
<comment type="domain">
    <text>The EIIB domain is phosphorylated by phospho-EIIA on a cysteinyl or histidyl residue, depending on the transported sugar. Then, it transfers the phosphoryl group to the sugar substrate concomitantly with the sugar uptake processed by the EIIC domain.</text>
</comment>
<organism>
    <name type="scientific">Klebsiella pneumoniae</name>
    <dbReference type="NCBI Taxonomy" id="573"/>
    <lineage>
        <taxon>Bacteria</taxon>
        <taxon>Pseudomonadati</taxon>
        <taxon>Pseudomonadota</taxon>
        <taxon>Gammaproteobacteria</taxon>
        <taxon>Enterobacterales</taxon>
        <taxon>Enterobacteriaceae</taxon>
        <taxon>Klebsiella/Raoultella group</taxon>
        <taxon>Klebsiella</taxon>
        <taxon>Klebsiella pneumoniae complex</taxon>
    </lineage>
</organism>
<accession>Q9AGA7</accession>
<gene>
    <name type="primary">aglA</name>
</gene>
<proteinExistence type="predicted"/>